<protein>
    <recommendedName>
        <fullName evidence="1">ATP synthase subunit b'</fullName>
    </recommendedName>
    <alternativeName>
        <fullName evidence="1">ATP synthase F(0) sector subunit b'</fullName>
    </alternativeName>
    <alternativeName>
        <fullName evidence="1">ATPase subunit II</fullName>
    </alternativeName>
    <alternativeName>
        <fullName evidence="1">F-type ATPase subunit b'</fullName>
        <shortName evidence="1">F-ATPase subunit b'</shortName>
    </alternativeName>
</protein>
<reference key="1">
    <citation type="journal article" date="2007" name="ISME J.">
        <title>Population level functional diversity in a microbial community revealed by comparative genomic and metagenomic analyses.</title>
        <authorList>
            <person name="Bhaya D."/>
            <person name="Grossman A.R."/>
            <person name="Steunou A.-S."/>
            <person name="Khuri N."/>
            <person name="Cohan F.M."/>
            <person name="Hamamura N."/>
            <person name="Melendrez M.C."/>
            <person name="Bateson M.M."/>
            <person name="Ward D.M."/>
            <person name="Heidelberg J.F."/>
        </authorList>
    </citation>
    <scope>NUCLEOTIDE SEQUENCE [LARGE SCALE GENOMIC DNA]</scope>
    <source>
        <strain>JA-3-3Ab</strain>
    </source>
</reference>
<name>ATPF2_SYNJA</name>
<organism>
    <name type="scientific">Synechococcus sp. (strain JA-3-3Ab)</name>
    <name type="common">Cyanobacteria bacterium Yellowstone A-Prime</name>
    <dbReference type="NCBI Taxonomy" id="321327"/>
    <lineage>
        <taxon>Bacteria</taxon>
        <taxon>Bacillati</taxon>
        <taxon>Cyanobacteriota</taxon>
        <taxon>Cyanophyceae</taxon>
        <taxon>Synechococcales</taxon>
        <taxon>Synechococcaceae</taxon>
        <taxon>Synechococcus</taxon>
    </lineage>
</organism>
<keyword id="KW-0066">ATP synthesis</keyword>
<keyword id="KW-0138">CF(0)</keyword>
<keyword id="KW-0375">Hydrogen ion transport</keyword>
<keyword id="KW-0406">Ion transport</keyword>
<keyword id="KW-0472">Membrane</keyword>
<keyword id="KW-0793">Thylakoid</keyword>
<keyword id="KW-0812">Transmembrane</keyword>
<keyword id="KW-1133">Transmembrane helix</keyword>
<keyword id="KW-0813">Transport</keyword>
<proteinExistence type="inferred from homology"/>
<dbReference type="EMBL" id="CP000239">
    <property type="protein sequence ID" value="ABD00256.1"/>
    <property type="molecule type" value="Genomic_DNA"/>
</dbReference>
<dbReference type="RefSeq" id="WP_011430930.1">
    <property type="nucleotide sequence ID" value="NC_007775.1"/>
</dbReference>
<dbReference type="SMR" id="Q2JSV8"/>
<dbReference type="STRING" id="321327.CYA_2116"/>
<dbReference type="KEGG" id="cya:CYA_2116"/>
<dbReference type="eggNOG" id="COG0711">
    <property type="taxonomic scope" value="Bacteria"/>
</dbReference>
<dbReference type="HOGENOM" id="CLU_079215_9_0_3"/>
<dbReference type="OrthoDB" id="426571at2"/>
<dbReference type="Proteomes" id="UP000008818">
    <property type="component" value="Chromosome"/>
</dbReference>
<dbReference type="GO" id="GO:0031676">
    <property type="term" value="C:plasma membrane-derived thylakoid membrane"/>
    <property type="evidence" value="ECO:0007669"/>
    <property type="project" value="UniProtKB-SubCell"/>
</dbReference>
<dbReference type="GO" id="GO:0045259">
    <property type="term" value="C:proton-transporting ATP synthase complex"/>
    <property type="evidence" value="ECO:0007669"/>
    <property type="project" value="UniProtKB-KW"/>
</dbReference>
<dbReference type="GO" id="GO:0046933">
    <property type="term" value="F:proton-transporting ATP synthase activity, rotational mechanism"/>
    <property type="evidence" value="ECO:0007669"/>
    <property type="project" value="UniProtKB-UniRule"/>
</dbReference>
<dbReference type="GO" id="GO:0046961">
    <property type="term" value="F:proton-transporting ATPase activity, rotational mechanism"/>
    <property type="evidence" value="ECO:0007669"/>
    <property type="project" value="TreeGrafter"/>
</dbReference>
<dbReference type="CDD" id="cd06503">
    <property type="entry name" value="ATP-synt_Fo_b"/>
    <property type="match status" value="1"/>
</dbReference>
<dbReference type="HAMAP" id="MF_01398">
    <property type="entry name" value="ATP_synth_b_bprime"/>
    <property type="match status" value="1"/>
</dbReference>
<dbReference type="HAMAP" id="MF_01399">
    <property type="entry name" value="ATP_synth_bprime"/>
    <property type="match status" value="1"/>
</dbReference>
<dbReference type="InterPro" id="IPR034679">
    <property type="entry name" value="ATP_synth_b"/>
</dbReference>
<dbReference type="InterPro" id="IPR028987">
    <property type="entry name" value="ATP_synth_B-like_membr_sf"/>
</dbReference>
<dbReference type="InterPro" id="IPR002146">
    <property type="entry name" value="ATP_synth_b/b'su_bac/chlpt"/>
</dbReference>
<dbReference type="InterPro" id="IPR050059">
    <property type="entry name" value="ATP_synthase_B_chain"/>
</dbReference>
<dbReference type="NCBIfam" id="NF005607">
    <property type="entry name" value="PRK07353.1"/>
    <property type="match status" value="1"/>
</dbReference>
<dbReference type="PANTHER" id="PTHR33445">
    <property type="entry name" value="ATP SYNTHASE SUBUNIT B', CHLOROPLASTIC"/>
    <property type="match status" value="1"/>
</dbReference>
<dbReference type="PANTHER" id="PTHR33445:SF2">
    <property type="entry name" value="ATP SYNTHASE SUBUNIT B', CHLOROPLASTIC"/>
    <property type="match status" value="1"/>
</dbReference>
<dbReference type="Pfam" id="PF00430">
    <property type="entry name" value="ATP-synt_B"/>
    <property type="match status" value="1"/>
</dbReference>
<dbReference type="SUPFAM" id="SSF81573">
    <property type="entry name" value="F1F0 ATP synthase subunit B, membrane domain"/>
    <property type="match status" value="1"/>
</dbReference>
<accession>Q2JSV8</accession>
<gene>
    <name evidence="1" type="primary">atpF2</name>
    <name evidence="1" type="synonym">atpG</name>
    <name type="ordered locus">CYA_2116</name>
</gene>
<feature type="chain" id="PRO_0000369054" description="ATP synthase subunit b'">
    <location>
        <begin position="1"/>
        <end position="157"/>
    </location>
</feature>
<feature type="transmembrane region" description="Helical" evidence="1">
    <location>
        <begin position="22"/>
        <end position="42"/>
    </location>
</feature>
<evidence type="ECO:0000255" key="1">
    <source>
        <dbReference type="HAMAP-Rule" id="MF_01399"/>
    </source>
</evidence>
<sequence>MICSTLLAVEAAEKNGLFDLDATLPIIAVQFLLLVAVLNSLFYEPVTRVIDSRNDYIRTTQAEAQERLDKAMALTRQYEAEIGQARLQAQQVIAEAEAAAARIRSEKLAAAQAEIQAKLEAARRQIEQEKQTALEQLQQQVDAIAAQITEKLLGSAR</sequence>
<comment type="function">
    <text evidence="1">F(1)F(0) ATP synthase produces ATP from ADP in the presence of a proton or sodium gradient. F-type ATPases consist of two structural domains, F(1) containing the extramembraneous catalytic core and F(0) containing the membrane proton channel, linked together by a central stalk and a peripheral stalk. During catalysis, ATP synthesis in the catalytic domain of F(1) is coupled via a rotary mechanism of the central stalk subunits to proton translocation.</text>
</comment>
<comment type="function">
    <text evidence="1">Component of the F(0) channel, it forms part of the peripheral stalk, linking F(1) to F(0). The b'-subunit is a diverged and duplicated form of b found in plants and photosynthetic bacteria.</text>
</comment>
<comment type="subunit">
    <text evidence="1">F-type ATPases have 2 components, F(1) - the catalytic core - and F(0) - the membrane proton channel. F(1) has five subunits: alpha(3), beta(3), gamma(1), delta(1), epsilon(1). F(0) has four main subunits: a(1), b(1), b'(1) and c(10-14). The alpha and beta chains form an alternating ring which encloses part of the gamma chain. F(1) is attached to F(0) by a central stalk formed by the gamma and epsilon chains, while a peripheral stalk is formed by the delta, b and b' chains.</text>
</comment>
<comment type="subcellular location">
    <subcellularLocation>
        <location evidence="1">Cellular thylakoid membrane</location>
        <topology evidence="1">Single-pass membrane protein</topology>
    </subcellularLocation>
</comment>
<comment type="similarity">
    <text evidence="1">Belongs to the ATPase B chain family.</text>
</comment>